<accession>P86341</accession>
<dbReference type="GO" id="GO:0005576">
    <property type="term" value="C:extracellular region"/>
    <property type="evidence" value="ECO:0007669"/>
    <property type="project" value="UniProtKB-SubCell"/>
</dbReference>
<organism>
    <name type="scientific">Brotheas amazonicus</name>
    <name type="common">Scorpion</name>
    <dbReference type="NCBI Taxonomy" id="662117"/>
    <lineage>
        <taxon>Eukaryota</taxon>
        <taxon>Metazoa</taxon>
        <taxon>Ecdysozoa</taxon>
        <taxon>Arthropoda</taxon>
        <taxon>Chelicerata</taxon>
        <taxon>Arachnida</taxon>
        <taxon>Scorpiones</taxon>
        <taxon>Iurida</taxon>
        <taxon>Chactoidea</taxon>
        <taxon>Chactidae</taxon>
        <taxon>Brotheinae</taxon>
        <taxon>Brotheini</taxon>
        <taxon>Brotheina</taxon>
        <taxon>Brotheas</taxon>
    </lineage>
</organism>
<name>VP1_BROAA</name>
<proteinExistence type="evidence at protein level"/>
<sequence length="9" mass="978">IWSGIQGAF</sequence>
<evidence type="ECO:0000269" key="1">
    <source ref="1"/>
</evidence>
<evidence type="ECO:0000303" key="2">
    <source ref="1"/>
</evidence>
<evidence type="ECO:0000305" key="3"/>
<keyword id="KW-0903">Direct protein sequencing</keyword>
<keyword id="KW-0964">Secreted</keyword>
<protein>
    <recommendedName>
        <fullName evidence="2">Venom peptide 1</fullName>
    </recommendedName>
    <alternativeName>
        <fullName evidence="2">BaP-1</fullName>
    </alternativeName>
</protein>
<reference evidence="3" key="1">
    <citation type="submission" date="2009-07" db="UniProtKB">
        <title>Brazilian scorpion Brotheas amazonicus venom peptidomics.</title>
        <authorList>
            <person name="Ireno I.C."/>
            <person name="Rates B.A."/>
            <person name="Pimenta A.M.C."/>
        </authorList>
    </citation>
    <scope>PROTEIN SEQUENCE</scope>
    <scope>SUBCELLULAR LOCATION</scope>
    <scope>TISSUE SPECIFICITY</scope>
    <source>
        <tissue evidence="1">Venom</tissue>
    </source>
</reference>
<comment type="subcellular location">
    <subcellularLocation>
        <location evidence="1">Secreted</location>
    </subcellularLocation>
</comment>
<comment type="tissue specificity">
    <text evidence="1">Expressed by the venom gland.</text>
</comment>
<feature type="peptide" id="PRO_0000383654" description="Venom peptide 1" evidence="1">
    <location>
        <begin position="1" status="less than"/>
        <end position="9" status="greater than"/>
    </location>
</feature>
<feature type="non-terminal residue" evidence="2">
    <location>
        <position position="1"/>
    </location>
</feature>
<feature type="non-terminal residue" evidence="2">
    <location>
        <position position="9"/>
    </location>
</feature>